<keyword id="KW-1185">Reference proteome</keyword>
<accession>P51726</accession>
<feature type="chain" id="PRO_0000165334" description="Putative tail tube protein">
    <location>
        <begin position="1"/>
        <end position="150"/>
    </location>
</feature>
<sequence>MERISGMSFDFYLFGLPIHAESISLSITDNSTVVQTRGIPDGWVSGDVAAEGEIELDAKNFSKLSAAAAAAGSYRSLPETDFTFFAQRGGIRDKVETFGNKIILTDVLNIDPKGGAKSMKKLKYFVTSPDFVRINGVSYLSDEDTRDLLG</sequence>
<reference key="1">
    <citation type="journal article" date="1984" name="Gene">
        <title>Nucleotide sequence of cloned DNA segments of the Haemophilus influenzae bacteriophage HP1c1.</title>
        <authorList>
            <person name="Benjamin R.C."/>
            <person name="Fitzmaurice W.P."/>
            <person name="Huang P.C."/>
            <person name="Scocca J.J."/>
        </authorList>
    </citation>
    <scope>NUCLEOTIDE SEQUENCE [GENOMIC DNA]</scope>
</reference>
<reference key="2">
    <citation type="journal article" date="1996" name="Nucleic Acids Res.">
        <title>The complete nucleotide sequence of bacteriophage HP1 DNA.</title>
        <authorList>
            <person name="Esposito D."/>
            <person name="Fitzmaurice W.P."/>
            <person name="Benjamin R.C."/>
            <person name="Goodman S.D."/>
            <person name="Waldman A.S."/>
            <person name="Scocca J.J."/>
        </authorList>
    </citation>
    <scope>NUCLEOTIDE SEQUENCE [LARGE SCALE GENOMIC DNA]</scope>
</reference>
<organism>
    <name type="scientific">Haemophilus phage HP1 (strain HP1c1)</name>
    <name type="common">Bacteriophage HP1</name>
    <dbReference type="NCBI Taxonomy" id="1289570"/>
    <lineage>
        <taxon>Viruses</taxon>
        <taxon>Duplodnaviria</taxon>
        <taxon>Heunggongvirae</taxon>
        <taxon>Uroviricota</taxon>
        <taxon>Caudoviricetes</taxon>
        <taxon>Peduoviridae</taxon>
        <taxon>Hpunavirus</taxon>
        <taxon>Haemophilus phage HP1</taxon>
    </lineage>
</organism>
<proteinExistence type="predicted"/>
<protein>
    <recommendedName>
        <fullName>Putative tail tube protein</fullName>
    </recommendedName>
    <alternativeName>
        <fullName>ORF24</fullName>
    </alternativeName>
</protein>
<organismHost>
    <name type="scientific">Haemophilus influenzae</name>
    <dbReference type="NCBI Taxonomy" id="727"/>
</organismHost>
<dbReference type="EMBL" id="U24159">
    <property type="protein sequence ID" value="AAB09209.1"/>
    <property type="molecule type" value="Genomic_DNA"/>
</dbReference>
<dbReference type="PIR" id="S69530">
    <property type="entry name" value="S69530"/>
</dbReference>
<dbReference type="RefSeq" id="NP_043493.1">
    <property type="nucleotide sequence ID" value="NC_001697.1"/>
</dbReference>
<dbReference type="GeneID" id="1261127"/>
<dbReference type="KEGG" id="vg:1261127"/>
<dbReference type="Proteomes" id="UP000001713">
    <property type="component" value="Segment"/>
</dbReference>
<dbReference type="InterPro" id="IPR019708">
    <property type="entry name" value="Phage_HP1_Orf24"/>
</dbReference>
<dbReference type="Pfam" id="PF10772">
    <property type="entry name" value="Phage_HP1_Orf24"/>
    <property type="match status" value="1"/>
</dbReference>
<name>YO24_BPHC1</name>